<evidence type="ECO:0000250" key="1">
    <source>
        <dbReference type="UniProtKB" id="P38827"/>
    </source>
</evidence>
<evidence type="ECO:0000250" key="2">
    <source>
        <dbReference type="UniProtKB" id="Q9Y7R4"/>
    </source>
</evidence>
<evidence type="ECO:0000255" key="3">
    <source>
        <dbReference type="PROSITE-ProRule" id="PRU00155"/>
    </source>
</evidence>
<evidence type="ECO:0000255" key="4">
    <source>
        <dbReference type="PROSITE-ProRule" id="PRU00176"/>
    </source>
</evidence>
<evidence type="ECO:0000255" key="5">
    <source>
        <dbReference type="PROSITE-ProRule" id="PRU00190"/>
    </source>
</evidence>
<evidence type="ECO:0000256" key="6">
    <source>
        <dbReference type="SAM" id="MobiDB-lite"/>
    </source>
</evidence>
<evidence type="ECO:0000305" key="7"/>
<organism>
    <name type="scientific">Yarrowia lipolytica (strain CLIB 122 / E 150)</name>
    <name type="common">Yeast</name>
    <name type="synonym">Candida lipolytica</name>
    <dbReference type="NCBI Taxonomy" id="284591"/>
    <lineage>
        <taxon>Eukaryota</taxon>
        <taxon>Fungi</taxon>
        <taxon>Dikarya</taxon>
        <taxon>Ascomycota</taxon>
        <taxon>Saccharomycotina</taxon>
        <taxon>Dipodascomycetes</taxon>
        <taxon>Dipodascales</taxon>
        <taxon>Dipodascales incertae sedis</taxon>
        <taxon>Yarrowia</taxon>
    </lineage>
</organism>
<accession>Q6CEK8</accession>
<protein>
    <recommendedName>
        <fullName>Histone-lysine N-methyltransferase, H3 lysine-4 specific</fullName>
        <ecNumber evidence="2">2.1.1.354</ecNumber>
    </recommendedName>
    <alternativeName>
        <fullName>COMPASS component SET1</fullName>
    </alternativeName>
    <alternativeName>
        <fullName>SET domain-containing protein 1</fullName>
    </alternativeName>
</protein>
<dbReference type="EC" id="2.1.1.354" evidence="2"/>
<dbReference type="EMBL" id="CR382128">
    <property type="protein sequence ID" value="CAG83155.1"/>
    <property type="molecule type" value="Genomic_DNA"/>
</dbReference>
<dbReference type="RefSeq" id="XP_500904.1">
    <property type="nucleotide sequence ID" value="XM_500904.1"/>
</dbReference>
<dbReference type="SMR" id="Q6CEK8"/>
<dbReference type="FunCoup" id="Q6CEK8">
    <property type="interactions" value="131"/>
</dbReference>
<dbReference type="STRING" id="284591.Q6CEK8"/>
<dbReference type="EnsemblFungi" id="CAG83155">
    <property type="protein sequence ID" value="CAG83155"/>
    <property type="gene ID" value="YALI0_B14883g"/>
</dbReference>
<dbReference type="KEGG" id="yli:2907346"/>
<dbReference type="VEuPathDB" id="FungiDB:YALI0_B14883g"/>
<dbReference type="HOGENOM" id="CLU_274191_0_0_1"/>
<dbReference type="InParanoid" id="Q6CEK8"/>
<dbReference type="OMA" id="ERLPCLC"/>
<dbReference type="OrthoDB" id="8077at4891"/>
<dbReference type="Proteomes" id="UP000001300">
    <property type="component" value="Chromosome B"/>
</dbReference>
<dbReference type="GO" id="GO:0005694">
    <property type="term" value="C:chromosome"/>
    <property type="evidence" value="ECO:0007669"/>
    <property type="project" value="UniProtKB-SubCell"/>
</dbReference>
<dbReference type="GO" id="GO:0048188">
    <property type="term" value="C:Set1C/COMPASS complex"/>
    <property type="evidence" value="ECO:0000250"/>
    <property type="project" value="UniProtKB"/>
</dbReference>
<dbReference type="GO" id="GO:0042800">
    <property type="term" value="F:histone H3K4 methyltransferase activity"/>
    <property type="evidence" value="ECO:0000318"/>
    <property type="project" value="GO_Central"/>
</dbReference>
<dbReference type="GO" id="GO:0140999">
    <property type="term" value="F:histone H3K4 trimethyltransferase activity"/>
    <property type="evidence" value="ECO:0007669"/>
    <property type="project" value="UniProtKB-EC"/>
</dbReference>
<dbReference type="GO" id="GO:0003723">
    <property type="term" value="F:RNA binding"/>
    <property type="evidence" value="ECO:0000250"/>
    <property type="project" value="UniProtKB"/>
</dbReference>
<dbReference type="GO" id="GO:0032259">
    <property type="term" value="P:methylation"/>
    <property type="evidence" value="ECO:0007669"/>
    <property type="project" value="UniProtKB-KW"/>
</dbReference>
<dbReference type="CDD" id="cd00590">
    <property type="entry name" value="RRM_SF"/>
    <property type="match status" value="1"/>
</dbReference>
<dbReference type="CDD" id="cd12303">
    <property type="entry name" value="RRM_spSet1p_like"/>
    <property type="match status" value="1"/>
</dbReference>
<dbReference type="Gene3D" id="3.30.70.330">
    <property type="match status" value="1"/>
</dbReference>
<dbReference type="Gene3D" id="2.170.270.10">
    <property type="entry name" value="SET domain"/>
    <property type="match status" value="1"/>
</dbReference>
<dbReference type="InterPro" id="IPR024657">
    <property type="entry name" value="COMPASS_Set1_N-SET"/>
</dbReference>
<dbReference type="InterPro" id="IPR012677">
    <property type="entry name" value="Nucleotide-bd_a/b_plait_sf"/>
</dbReference>
<dbReference type="InterPro" id="IPR003616">
    <property type="entry name" value="Post-SET_dom"/>
</dbReference>
<dbReference type="InterPro" id="IPR035979">
    <property type="entry name" value="RBD_domain_sf"/>
</dbReference>
<dbReference type="InterPro" id="IPR000504">
    <property type="entry name" value="RRM_dom"/>
</dbReference>
<dbReference type="InterPro" id="IPR044570">
    <property type="entry name" value="Set1-like"/>
</dbReference>
<dbReference type="InterPro" id="IPR017111">
    <property type="entry name" value="Set1_fungi"/>
</dbReference>
<dbReference type="InterPro" id="IPR024636">
    <property type="entry name" value="SET_assoc"/>
</dbReference>
<dbReference type="InterPro" id="IPR001214">
    <property type="entry name" value="SET_dom"/>
</dbReference>
<dbReference type="InterPro" id="IPR046341">
    <property type="entry name" value="SET_dom_sf"/>
</dbReference>
<dbReference type="PANTHER" id="PTHR45814">
    <property type="entry name" value="HISTONE-LYSINE N-METHYLTRANSFERASE SETD1"/>
    <property type="match status" value="1"/>
</dbReference>
<dbReference type="PANTHER" id="PTHR45814:SF2">
    <property type="entry name" value="HISTONE-LYSINE N-METHYLTRANSFERASE SETD1"/>
    <property type="match status" value="1"/>
</dbReference>
<dbReference type="Pfam" id="PF11764">
    <property type="entry name" value="N-SET"/>
    <property type="match status" value="1"/>
</dbReference>
<dbReference type="Pfam" id="PF00076">
    <property type="entry name" value="RRM_1"/>
    <property type="match status" value="1"/>
</dbReference>
<dbReference type="Pfam" id="PF00856">
    <property type="entry name" value="SET"/>
    <property type="match status" value="1"/>
</dbReference>
<dbReference type="Pfam" id="PF11767">
    <property type="entry name" value="SET_assoc"/>
    <property type="match status" value="1"/>
</dbReference>
<dbReference type="PIRSF" id="PIRSF037104">
    <property type="entry name" value="Histone_H3-K4_mtfrase_Set1_fun"/>
    <property type="match status" value="1"/>
</dbReference>
<dbReference type="SMART" id="SM01291">
    <property type="entry name" value="N-SET"/>
    <property type="match status" value="1"/>
</dbReference>
<dbReference type="SMART" id="SM00508">
    <property type="entry name" value="PostSET"/>
    <property type="match status" value="1"/>
</dbReference>
<dbReference type="SMART" id="SM00360">
    <property type="entry name" value="RRM"/>
    <property type="match status" value="2"/>
</dbReference>
<dbReference type="SMART" id="SM00317">
    <property type="entry name" value="SET"/>
    <property type="match status" value="1"/>
</dbReference>
<dbReference type="SUPFAM" id="SSF54928">
    <property type="entry name" value="RNA-binding domain, RBD"/>
    <property type="match status" value="1"/>
</dbReference>
<dbReference type="SUPFAM" id="SSF82199">
    <property type="entry name" value="SET domain"/>
    <property type="match status" value="1"/>
</dbReference>
<dbReference type="PROSITE" id="PS50868">
    <property type="entry name" value="POST_SET"/>
    <property type="match status" value="1"/>
</dbReference>
<dbReference type="PROSITE" id="PS50102">
    <property type="entry name" value="RRM"/>
    <property type="match status" value="1"/>
</dbReference>
<dbReference type="PROSITE" id="PS51572">
    <property type="entry name" value="SAM_MT43_1"/>
    <property type="match status" value="1"/>
</dbReference>
<dbReference type="PROSITE" id="PS50280">
    <property type="entry name" value="SET"/>
    <property type="match status" value="1"/>
</dbReference>
<reference key="1">
    <citation type="journal article" date="2004" name="Nature">
        <title>Genome evolution in yeasts.</title>
        <authorList>
            <person name="Dujon B."/>
            <person name="Sherman D."/>
            <person name="Fischer G."/>
            <person name="Durrens P."/>
            <person name="Casaregola S."/>
            <person name="Lafontaine I."/>
            <person name="de Montigny J."/>
            <person name="Marck C."/>
            <person name="Neuveglise C."/>
            <person name="Talla E."/>
            <person name="Goffard N."/>
            <person name="Frangeul L."/>
            <person name="Aigle M."/>
            <person name="Anthouard V."/>
            <person name="Babour A."/>
            <person name="Barbe V."/>
            <person name="Barnay S."/>
            <person name="Blanchin S."/>
            <person name="Beckerich J.-M."/>
            <person name="Beyne E."/>
            <person name="Bleykasten C."/>
            <person name="Boisrame A."/>
            <person name="Boyer J."/>
            <person name="Cattolico L."/>
            <person name="Confanioleri F."/>
            <person name="de Daruvar A."/>
            <person name="Despons L."/>
            <person name="Fabre E."/>
            <person name="Fairhead C."/>
            <person name="Ferry-Dumazet H."/>
            <person name="Groppi A."/>
            <person name="Hantraye F."/>
            <person name="Hennequin C."/>
            <person name="Jauniaux N."/>
            <person name="Joyet P."/>
            <person name="Kachouri R."/>
            <person name="Kerrest A."/>
            <person name="Koszul R."/>
            <person name="Lemaire M."/>
            <person name="Lesur I."/>
            <person name="Ma L."/>
            <person name="Muller H."/>
            <person name="Nicaud J.-M."/>
            <person name="Nikolski M."/>
            <person name="Oztas S."/>
            <person name="Ozier-Kalogeropoulos O."/>
            <person name="Pellenz S."/>
            <person name="Potier S."/>
            <person name="Richard G.-F."/>
            <person name="Straub M.-L."/>
            <person name="Suleau A."/>
            <person name="Swennen D."/>
            <person name="Tekaia F."/>
            <person name="Wesolowski-Louvel M."/>
            <person name="Westhof E."/>
            <person name="Wirth B."/>
            <person name="Zeniou-Meyer M."/>
            <person name="Zivanovic Y."/>
            <person name="Bolotin-Fukuhara M."/>
            <person name="Thierry A."/>
            <person name="Bouchier C."/>
            <person name="Caudron B."/>
            <person name="Scarpelli C."/>
            <person name="Gaillardin C."/>
            <person name="Weissenbach J."/>
            <person name="Wincker P."/>
            <person name="Souciet J.-L."/>
        </authorList>
    </citation>
    <scope>NUCLEOTIDE SEQUENCE [LARGE SCALE GENOMIC DNA]</scope>
    <source>
        <strain>CLIB 122 / E 150</strain>
    </source>
</reference>
<feature type="chain" id="PRO_0000269778" description="Histone-lysine N-methyltransferase, H3 lysine-4 specific">
    <location>
        <begin position="1"/>
        <end position="1170"/>
    </location>
</feature>
<feature type="domain" description="RRM" evidence="4">
    <location>
        <begin position="403"/>
        <end position="489"/>
    </location>
</feature>
<feature type="domain" description="SET" evidence="5">
    <location>
        <begin position="1029"/>
        <end position="1146"/>
    </location>
</feature>
<feature type="domain" description="Post-SET" evidence="3">
    <location>
        <begin position="1154"/>
        <end position="1170"/>
    </location>
</feature>
<feature type="region of interest" description="Disordered" evidence="6">
    <location>
        <begin position="1"/>
        <end position="382"/>
    </location>
</feature>
<feature type="region of interest" description="Disordered" evidence="6">
    <location>
        <begin position="625"/>
        <end position="646"/>
    </location>
</feature>
<feature type="region of interest" description="Disordered" evidence="6">
    <location>
        <begin position="687"/>
        <end position="843"/>
    </location>
</feature>
<feature type="short sequence motif" description="RxxxRR motif" evidence="1">
    <location>
        <begin position="995"/>
        <end position="1000"/>
    </location>
</feature>
<feature type="compositionally biased region" description="Basic and acidic residues" evidence="6">
    <location>
        <begin position="17"/>
        <end position="188"/>
    </location>
</feature>
<feature type="compositionally biased region" description="Basic and acidic residues" evidence="6">
    <location>
        <begin position="198"/>
        <end position="226"/>
    </location>
</feature>
<feature type="compositionally biased region" description="Basic and acidic residues" evidence="6">
    <location>
        <begin position="242"/>
        <end position="276"/>
    </location>
</feature>
<feature type="compositionally biased region" description="Polar residues" evidence="6">
    <location>
        <begin position="278"/>
        <end position="294"/>
    </location>
</feature>
<feature type="compositionally biased region" description="Pro residues" evidence="6">
    <location>
        <begin position="302"/>
        <end position="311"/>
    </location>
</feature>
<feature type="compositionally biased region" description="Basic and acidic residues" evidence="6">
    <location>
        <begin position="316"/>
        <end position="325"/>
    </location>
</feature>
<feature type="compositionally biased region" description="Basic and acidic residues" evidence="6">
    <location>
        <begin position="337"/>
        <end position="365"/>
    </location>
</feature>
<feature type="compositionally biased region" description="Basic and acidic residues" evidence="6">
    <location>
        <begin position="731"/>
        <end position="742"/>
    </location>
</feature>
<feature type="compositionally biased region" description="Acidic residues" evidence="6">
    <location>
        <begin position="811"/>
        <end position="836"/>
    </location>
</feature>
<feature type="binding site" evidence="5">
    <location>
        <position position="1145"/>
    </location>
    <ligand>
        <name>S-adenosyl-L-methionine</name>
        <dbReference type="ChEBI" id="CHEBI:59789"/>
    </ligand>
</feature>
<keyword id="KW-0156">Chromatin regulator</keyword>
<keyword id="KW-0158">Chromosome</keyword>
<keyword id="KW-0489">Methyltransferase</keyword>
<keyword id="KW-0539">Nucleus</keyword>
<keyword id="KW-1185">Reference proteome</keyword>
<keyword id="KW-0694">RNA-binding</keyword>
<keyword id="KW-0949">S-adenosyl-L-methionine</keyword>
<keyword id="KW-0808">Transferase</keyword>
<name>SET1_YARLI</name>
<comment type="function">
    <text evidence="1">Catalytic component of the COMPASS (Set1C) complex that specifically mono-, di- and trimethylates histone H3 to form H3K4me1/2/3. Binds RNAs which might negatively affect its histone methyltransferase activity. COMPASS recognizes ubiquitinated H2B on one face of the nucleosome which stimulates the methylation of H3 on the opposing face.</text>
</comment>
<comment type="catalytic activity">
    <reaction evidence="1">
        <text>L-lysyl(4)-[histone H3] + 3 S-adenosyl-L-methionine = N(6),N(6),N(6)-trimethyl-L-lysyl(4)-[histone H3] + 3 S-adenosyl-L-homocysteine + 3 H(+)</text>
        <dbReference type="Rhea" id="RHEA:60260"/>
        <dbReference type="Rhea" id="RHEA-COMP:15537"/>
        <dbReference type="Rhea" id="RHEA-COMP:15547"/>
        <dbReference type="ChEBI" id="CHEBI:15378"/>
        <dbReference type="ChEBI" id="CHEBI:29969"/>
        <dbReference type="ChEBI" id="CHEBI:57856"/>
        <dbReference type="ChEBI" id="CHEBI:59789"/>
        <dbReference type="ChEBI" id="CHEBI:61961"/>
        <dbReference type="EC" id="2.1.1.354"/>
    </reaction>
</comment>
<comment type="catalytic activity">
    <reaction evidence="1">
        <text>N(6)-methyl-L-lysyl(4)-[histone H3] + S-adenosyl-L-methionine = N(6),N(6)-dimethyl-L-lysyl(4)-[histone H3] + S-adenosyl-L-homocysteine + H(+)</text>
        <dbReference type="Rhea" id="RHEA:60268"/>
        <dbReference type="Rhea" id="RHEA-COMP:15540"/>
        <dbReference type="Rhea" id="RHEA-COMP:15543"/>
        <dbReference type="ChEBI" id="CHEBI:15378"/>
        <dbReference type="ChEBI" id="CHEBI:57856"/>
        <dbReference type="ChEBI" id="CHEBI:59789"/>
        <dbReference type="ChEBI" id="CHEBI:61929"/>
        <dbReference type="ChEBI" id="CHEBI:61976"/>
    </reaction>
</comment>
<comment type="catalytic activity">
    <reaction evidence="1">
        <text>N(6),N(6)-dimethyl-L-lysyl(4)-[histone H3] + S-adenosyl-L-methionine = N(6),N(6),N(6)-trimethyl-L-lysyl(4)-[histone H3] + S-adenosyl-L-homocysteine + H(+)</text>
        <dbReference type="Rhea" id="RHEA:60272"/>
        <dbReference type="Rhea" id="RHEA-COMP:15537"/>
        <dbReference type="Rhea" id="RHEA-COMP:15540"/>
        <dbReference type="ChEBI" id="CHEBI:15378"/>
        <dbReference type="ChEBI" id="CHEBI:57856"/>
        <dbReference type="ChEBI" id="CHEBI:59789"/>
        <dbReference type="ChEBI" id="CHEBI:61961"/>
        <dbReference type="ChEBI" id="CHEBI:61976"/>
    </reaction>
</comment>
<comment type="subunit">
    <text evidence="1">Component of the Set1C/COMPASS complex.</text>
</comment>
<comment type="subcellular location">
    <subcellularLocation>
        <location evidence="7">Nucleus</location>
    </subcellularLocation>
    <subcellularLocation>
        <location evidence="7">Chromosome</location>
    </subcellularLocation>
</comment>
<comment type="domain">
    <text evidence="1">The RxxxRR motif forms an adapter helix that bridges the nucleosome and ubiquitin.</text>
</comment>
<comment type="similarity">
    <text evidence="5">Belongs to the class V-like SAM-binding methyltransferase superfamily.</text>
</comment>
<proteinExistence type="inferred from homology"/>
<sequence length="1170" mass="133489">MANGSDTKPVPKGPRGARADDTRTPPHPDRRGSDRDQYFSKDRSYGGRTDRDYSDYDRAYPPPRDYDRYGGGKYGKYDKYDKYDRYDRLDSHDYPPRRDRDYDRSRDARDTDSRDYGRLPPRDTRPPPRGGREYRYARDERGWDRDRRDLDRDRDRDPRDRERDARDRDRDRDFRDRDHDPRDRDPKGYRPHSLDPLPSRDRDMPPRERERELVRERDLFSRDRDLITGVRELARSPPPPLRDGRNRDRSNDRHDRSFDKHTRDRGTRDRDTKEKGSVISTPQTAPTPRLTPTNGKPDLPTSQPPAPPSPPRLKTFPKEVWETVGRKNNTRLTYDPELSKDKQKGKRGIYEEVKKGASTTEDPRSKHPHYFKTSSKSNKKPYQRLPVPRFLYDANSIAPPPSTQIIVKGLSSLTTSKTITAHFKTYGELEAVNMVEDPATGSSVGACLVRFKVTKNNYEAAHECLKKAIRGQKTGRIDQAKYRVEPDEDGAKAKDIIKRVAARAAKKAMPVKQPPTAPAADKSIMEKLPTPVPSARPSPKAAQLMKTSAYIFIAGKYLPSEKVFASDIRRILRDFGWFDVLKEGDGFYVFFDNNRDTVECYEAMNGRKVNGHQMAMAMIRLSRVAPKTKESEENATEQAPKLPPKEEARKLIVQELANSLRKDIRERVIAAAIVEFLNPARFTHIKQDPEPSAATEPNTVNASAARVDTPEPVQSSSAIPGFLPRFKIKRKGDPTKKKDATKKNRKKISARPMNHVLNDYYSDEEDSTRMSTPIVPDTSADAAELPIRKPRKKISQSKQRIMDFSSSEGSNESEEEEEVEDDMEEEEDETAQEELQEASTLDTSQQLTTAFGEILDWAPAHGFPQPVTADKKGGALTTISGFQALVKDDEDMELLQEALEGIEPEKINGEAWTWTHKHLNEAVAKENAEFPELAAPNAFVNSTGSWKSQGYFKIPEAAKSEYLPHRKKLNIPIDTLQMENREKKKENASNSRVNRANNRRLVADINMQKQLLSTETDVLNFNQLRKRKKPVKFARSAIHNWGLYAIEPIAANEMIIEYVGEVVRQEIADLREARYMRSGIGSSYLFRVDESTVVDATKRGGIARFINHCCTPSCTAKIIKVEGQKRIVIYASRDIAANEELTYDYKFEKEIGEERIPCLCGAPGCKGYLN</sequence>
<gene>
    <name type="primary">SET1</name>
    <name type="ordered locus">YALI0B14883g</name>
</gene>